<dbReference type="EC" id="3.5.1.18" evidence="1"/>
<dbReference type="EMBL" id="CP000304">
    <property type="protein sequence ID" value="ABP80340.1"/>
    <property type="molecule type" value="Genomic_DNA"/>
</dbReference>
<dbReference type="RefSeq" id="WP_011913797.1">
    <property type="nucleotide sequence ID" value="NC_009434.1"/>
</dbReference>
<dbReference type="SMR" id="A4VMY9"/>
<dbReference type="MEROPS" id="M20.010"/>
<dbReference type="KEGG" id="psa:PST_2690"/>
<dbReference type="eggNOG" id="COG0624">
    <property type="taxonomic scope" value="Bacteria"/>
</dbReference>
<dbReference type="HOGENOM" id="CLU_021802_4_0_6"/>
<dbReference type="UniPathway" id="UPA00034">
    <property type="reaction ID" value="UER00021"/>
</dbReference>
<dbReference type="Proteomes" id="UP000000233">
    <property type="component" value="Chromosome"/>
</dbReference>
<dbReference type="GO" id="GO:0008777">
    <property type="term" value="F:acetylornithine deacetylase activity"/>
    <property type="evidence" value="ECO:0007669"/>
    <property type="project" value="TreeGrafter"/>
</dbReference>
<dbReference type="GO" id="GO:0050897">
    <property type="term" value="F:cobalt ion binding"/>
    <property type="evidence" value="ECO:0007669"/>
    <property type="project" value="UniProtKB-UniRule"/>
</dbReference>
<dbReference type="GO" id="GO:0009014">
    <property type="term" value="F:succinyl-diaminopimelate desuccinylase activity"/>
    <property type="evidence" value="ECO:0007669"/>
    <property type="project" value="UniProtKB-UniRule"/>
</dbReference>
<dbReference type="GO" id="GO:0008270">
    <property type="term" value="F:zinc ion binding"/>
    <property type="evidence" value="ECO:0007669"/>
    <property type="project" value="UniProtKB-UniRule"/>
</dbReference>
<dbReference type="GO" id="GO:0019877">
    <property type="term" value="P:diaminopimelate biosynthetic process"/>
    <property type="evidence" value="ECO:0007669"/>
    <property type="project" value="UniProtKB-UniRule"/>
</dbReference>
<dbReference type="GO" id="GO:0006526">
    <property type="term" value="P:L-arginine biosynthetic process"/>
    <property type="evidence" value="ECO:0007669"/>
    <property type="project" value="TreeGrafter"/>
</dbReference>
<dbReference type="GO" id="GO:0009089">
    <property type="term" value="P:lysine biosynthetic process via diaminopimelate"/>
    <property type="evidence" value="ECO:0007669"/>
    <property type="project" value="UniProtKB-UniRule"/>
</dbReference>
<dbReference type="CDD" id="cd03891">
    <property type="entry name" value="M20_DapE_proteobac"/>
    <property type="match status" value="1"/>
</dbReference>
<dbReference type="FunFam" id="3.30.70.360:FF:000011">
    <property type="entry name" value="Succinyl-diaminopimelate desuccinylase"/>
    <property type="match status" value="1"/>
</dbReference>
<dbReference type="FunFam" id="3.40.630.10:FF:000005">
    <property type="entry name" value="Succinyl-diaminopimelate desuccinylase"/>
    <property type="match status" value="1"/>
</dbReference>
<dbReference type="Gene3D" id="3.40.630.10">
    <property type="entry name" value="Zn peptidases"/>
    <property type="match status" value="2"/>
</dbReference>
<dbReference type="HAMAP" id="MF_01690">
    <property type="entry name" value="DapE"/>
    <property type="match status" value="1"/>
</dbReference>
<dbReference type="InterPro" id="IPR001261">
    <property type="entry name" value="ArgE/DapE_CS"/>
</dbReference>
<dbReference type="InterPro" id="IPR036264">
    <property type="entry name" value="Bact_exopeptidase_dim_dom"/>
</dbReference>
<dbReference type="InterPro" id="IPR005941">
    <property type="entry name" value="DapE_proteobac"/>
</dbReference>
<dbReference type="InterPro" id="IPR002933">
    <property type="entry name" value="Peptidase_M20"/>
</dbReference>
<dbReference type="InterPro" id="IPR011650">
    <property type="entry name" value="Peptidase_M20_dimer"/>
</dbReference>
<dbReference type="InterPro" id="IPR050072">
    <property type="entry name" value="Peptidase_M20A"/>
</dbReference>
<dbReference type="NCBIfam" id="TIGR01246">
    <property type="entry name" value="dapE_proteo"/>
    <property type="match status" value="1"/>
</dbReference>
<dbReference type="NCBIfam" id="NF009557">
    <property type="entry name" value="PRK13009.1"/>
    <property type="match status" value="1"/>
</dbReference>
<dbReference type="PANTHER" id="PTHR43808">
    <property type="entry name" value="ACETYLORNITHINE DEACETYLASE"/>
    <property type="match status" value="1"/>
</dbReference>
<dbReference type="PANTHER" id="PTHR43808:SF31">
    <property type="entry name" value="N-ACETYL-L-CITRULLINE DEACETYLASE"/>
    <property type="match status" value="1"/>
</dbReference>
<dbReference type="Pfam" id="PF07687">
    <property type="entry name" value="M20_dimer"/>
    <property type="match status" value="1"/>
</dbReference>
<dbReference type="Pfam" id="PF01546">
    <property type="entry name" value="Peptidase_M20"/>
    <property type="match status" value="1"/>
</dbReference>
<dbReference type="SUPFAM" id="SSF55031">
    <property type="entry name" value="Bacterial exopeptidase dimerisation domain"/>
    <property type="match status" value="1"/>
</dbReference>
<dbReference type="SUPFAM" id="SSF53187">
    <property type="entry name" value="Zn-dependent exopeptidases"/>
    <property type="match status" value="1"/>
</dbReference>
<dbReference type="PROSITE" id="PS00759">
    <property type="entry name" value="ARGE_DAPE_CPG2_2"/>
    <property type="match status" value="1"/>
</dbReference>
<reference key="1">
    <citation type="journal article" date="2008" name="Proc. Natl. Acad. Sci. U.S.A.">
        <title>Nitrogen fixation island and rhizosphere competence traits in the genome of root-associated Pseudomonas stutzeri A1501.</title>
        <authorList>
            <person name="Yan Y."/>
            <person name="Yang J."/>
            <person name="Dou Y."/>
            <person name="Chen M."/>
            <person name="Ping S."/>
            <person name="Peng J."/>
            <person name="Lu W."/>
            <person name="Zhang W."/>
            <person name="Yao Z."/>
            <person name="Li H."/>
            <person name="Liu W."/>
            <person name="He S."/>
            <person name="Geng L."/>
            <person name="Zhang X."/>
            <person name="Yang F."/>
            <person name="Yu H."/>
            <person name="Zhan Y."/>
            <person name="Li D."/>
            <person name="Lin Z."/>
            <person name="Wang Y."/>
            <person name="Elmerich C."/>
            <person name="Lin M."/>
            <person name="Jin Q."/>
        </authorList>
    </citation>
    <scope>NUCLEOTIDE SEQUENCE [LARGE SCALE GENOMIC DNA]</scope>
    <source>
        <strain>A1501</strain>
    </source>
</reference>
<comment type="function">
    <text evidence="1">Catalyzes the hydrolysis of N-succinyl-L,L-diaminopimelic acid (SDAP), forming succinate and LL-2,6-diaminopimelate (DAP), an intermediate involved in the bacterial biosynthesis of lysine and meso-diaminopimelic acid, an essential component of bacterial cell walls.</text>
</comment>
<comment type="catalytic activity">
    <reaction evidence="1">
        <text>N-succinyl-(2S,6S)-2,6-diaminopimelate + H2O = (2S,6S)-2,6-diaminopimelate + succinate</text>
        <dbReference type="Rhea" id="RHEA:22608"/>
        <dbReference type="ChEBI" id="CHEBI:15377"/>
        <dbReference type="ChEBI" id="CHEBI:30031"/>
        <dbReference type="ChEBI" id="CHEBI:57609"/>
        <dbReference type="ChEBI" id="CHEBI:58087"/>
        <dbReference type="EC" id="3.5.1.18"/>
    </reaction>
</comment>
<comment type="cofactor">
    <cofactor evidence="1">
        <name>Zn(2+)</name>
        <dbReference type="ChEBI" id="CHEBI:29105"/>
    </cofactor>
    <cofactor evidence="1">
        <name>Co(2+)</name>
        <dbReference type="ChEBI" id="CHEBI:48828"/>
    </cofactor>
    <text evidence="1">Binds 2 Zn(2+) or Co(2+) ions per subunit.</text>
</comment>
<comment type="pathway">
    <text evidence="1">Amino-acid biosynthesis; L-lysine biosynthesis via DAP pathway; LL-2,6-diaminopimelate from (S)-tetrahydrodipicolinate (succinylase route): step 3/3.</text>
</comment>
<comment type="subunit">
    <text evidence="1">Homodimer.</text>
</comment>
<comment type="similarity">
    <text evidence="1">Belongs to the peptidase M20A family. DapE subfamily.</text>
</comment>
<name>DAPE_STUS1</name>
<evidence type="ECO:0000255" key="1">
    <source>
        <dbReference type="HAMAP-Rule" id="MF_01690"/>
    </source>
</evidence>
<protein>
    <recommendedName>
        <fullName evidence="1">Succinyl-diaminopimelate desuccinylase</fullName>
        <shortName evidence="1">SDAP desuccinylase</shortName>
        <ecNumber evidence="1">3.5.1.18</ecNumber>
    </recommendedName>
    <alternativeName>
        <fullName evidence="1">N-succinyl-LL-2,6-diaminoheptanedioate amidohydrolase</fullName>
    </alternativeName>
</protein>
<feature type="chain" id="PRO_0000375665" description="Succinyl-diaminopimelate desuccinylase">
    <location>
        <begin position="1"/>
        <end position="382"/>
    </location>
</feature>
<feature type="active site" evidence="1">
    <location>
        <position position="73"/>
    </location>
</feature>
<feature type="active site" description="Proton acceptor" evidence="1">
    <location>
        <position position="139"/>
    </location>
</feature>
<feature type="binding site" evidence="1">
    <location>
        <position position="71"/>
    </location>
    <ligand>
        <name>Zn(2+)</name>
        <dbReference type="ChEBI" id="CHEBI:29105"/>
        <label>1</label>
    </ligand>
</feature>
<feature type="binding site" evidence="1">
    <location>
        <position position="105"/>
    </location>
    <ligand>
        <name>Zn(2+)</name>
        <dbReference type="ChEBI" id="CHEBI:29105"/>
        <label>1</label>
    </ligand>
</feature>
<feature type="binding site" evidence="1">
    <location>
        <position position="105"/>
    </location>
    <ligand>
        <name>Zn(2+)</name>
        <dbReference type="ChEBI" id="CHEBI:29105"/>
        <label>2</label>
    </ligand>
</feature>
<feature type="binding site" evidence="1">
    <location>
        <position position="140"/>
    </location>
    <ligand>
        <name>Zn(2+)</name>
        <dbReference type="ChEBI" id="CHEBI:29105"/>
        <label>2</label>
    </ligand>
</feature>
<feature type="binding site" evidence="1">
    <location>
        <position position="168"/>
    </location>
    <ligand>
        <name>Zn(2+)</name>
        <dbReference type="ChEBI" id="CHEBI:29105"/>
        <label>1</label>
    </ligand>
</feature>
<feature type="binding site" evidence="1">
    <location>
        <position position="354"/>
    </location>
    <ligand>
        <name>Zn(2+)</name>
        <dbReference type="ChEBI" id="CHEBI:29105"/>
        <label>2</label>
    </ligand>
</feature>
<sequence>MTAPALSPTLELACELINRPSVTPLDEGCQQLMSQRLAACGFAIEPMHIEDVENFWAIRGNEGPVLCFAGHTDVVPTGPLQAWQNPPFSARIDEQGMLHGRGAADMKGSLAAMVVAVERFTADHPDHKGQIAFLITSDEEGPAHHGTKAVVERLRERGQRLDWCIVGEPSSTSLVGDVVKNGRRGSLGGTLTVRGQQGHVAYPHLAKNPIHLAAPALAELAAEHWDDGNAFFPPTSFQISNLNAGTGATNVIPGTLEAVFNFRFSTESTVEGLQQRTAAILDKHGLDWSIDWALSGLPFLTEPGDLLDGVAKAIRSVTGRETTPSTSGGTSDGRFIATLGTQVVELGPVNATIHQVDEHILASDLDVLTDIYYQTLVNLLAC</sequence>
<keyword id="KW-0028">Amino-acid biosynthesis</keyword>
<keyword id="KW-0170">Cobalt</keyword>
<keyword id="KW-0220">Diaminopimelate biosynthesis</keyword>
<keyword id="KW-0378">Hydrolase</keyword>
<keyword id="KW-0457">Lysine biosynthesis</keyword>
<keyword id="KW-0479">Metal-binding</keyword>
<keyword id="KW-1185">Reference proteome</keyword>
<keyword id="KW-0862">Zinc</keyword>
<proteinExistence type="inferred from homology"/>
<accession>A4VMY9</accession>
<organism>
    <name type="scientific">Stutzerimonas stutzeri (strain A1501)</name>
    <name type="common">Pseudomonas stutzeri</name>
    <dbReference type="NCBI Taxonomy" id="379731"/>
    <lineage>
        <taxon>Bacteria</taxon>
        <taxon>Pseudomonadati</taxon>
        <taxon>Pseudomonadota</taxon>
        <taxon>Gammaproteobacteria</taxon>
        <taxon>Pseudomonadales</taxon>
        <taxon>Pseudomonadaceae</taxon>
        <taxon>Stutzerimonas</taxon>
    </lineage>
</organism>
<gene>
    <name evidence="1" type="primary">dapE</name>
    <name type="ordered locus">PST_2690</name>
</gene>